<comment type="function">
    <text evidence="1">DNA-dependent RNA polymerase catalyzes the transcription of DNA into RNA using the four ribonucleoside triphosphates as substrates.</text>
</comment>
<comment type="catalytic activity">
    <reaction evidence="1">
        <text>RNA(n) + a ribonucleoside 5'-triphosphate = RNA(n+1) + diphosphate</text>
        <dbReference type="Rhea" id="RHEA:21248"/>
        <dbReference type="Rhea" id="RHEA-COMP:14527"/>
        <dbReference type="Rhea" id="RHEA-COMP:17342"/>
        <dbReference type="ChEBI" id="CHEBI:33019"/>
        <dbReference type="ChEBI" id="CHEBI:61557"/>
        <dbReference type="ChEBI" id="CHEBI:140395"/>
        <dbReference type="EC" id="2.7.7.6"/>
    </reaction>
</comment>
<comment type="subunit">
    <text evidence="1">The RNAP catalytic core consists of 2 alpha, 1 beta, 1 beta' and 1 omega subunit. When a sigma factor is associated with the core the holoenzyme is formed, which can initiate transcription.</text>
</comment>
<comment type="similarity">
    <text evidence="1">Belongs to the RNA polymerase beta chain family.</text>
</comment>
<evidence type="ECO:0000255" key="1">
    <source>
        <dbReference type="HAMAP-Rule" id="MF_01321"/>
    </source>
</evidence>
<gene>
    <name evidence="1" type="primary">rpoB</name>
    <name type="ordered locus">Smal_0749</name>
</gene>
<accession>B4SKV6</accession>
<name>RPOB_STRM5</name>
<sequence length="1384" mass="154327">MTSYSFTEKKRIRKDFGKQRSILEVPFLLAIQVDSYREFLQENVDPAKRTDHGLHAALKSVFPIASYSGNAALEYVGYKLGEPVFDERECRQRGMSYGAPLRVTVRLVIYDRESSTKAIKYVKEQEVYLGEIPLMTENGTFIVNGTERVIVSQLHRSPGVFFDHDRGKTHSSGKLLYSARIIPYRGSWLDFEFDPKDALFTRIDRRRKLPVSILLRALGYSNEEMLAEFFEINTFHINPDEGVQLELVPERLRGETLGFDLADGDKVIVEAGKRITARHIKQLEASGIAALAVPDDYIVGRILSHDVVDASTGELLAQANDEITDEQLQAFRKAGVDAVGTLWVNDLDRGPYLSNTLRIDPTKTQLEALVEIYRMMRPGEPPTKDAAQNLFHNLFFTFERYDLSAVGRMKFNRRVGRKETTGEAVLYDRKYYGERNDEESKRLVAAHGDSSDILDVIKVLTEIRNGRGVVDDIDHLGNRRVRSVGEMAENVFRVGLVRVERAVKERLSMAESEGLTPQELINAKPVAAAIKEFFGSSQLSQFMDQNNPLSEVTHKRRVSALGPGGLTRERAGFEVRDVHPTHYGRVCTIETPEGPNIGLINSLAVYARTNQYGFLETPYRKVVDGKVYDEVEFLSAIEENEYVIAQANALTNADSVLTEQFVPCRFQGESLLKPPAEVHFMDVSPMQTVSIAAALVPFLEHDDANRALMGANMQRQAVPTLRAQKPLVGTGIERAVARDSGVTVNARRGGEIVQIDAARIVVKVVEEEIVGATDAGVDIYNLVKYTRSNQNTCINQRPLVQVGDIIARGDVLADGPSTDIGELALGQNMLIAFMPWNGYNFEDSILLSERVVEEDRYTTIHIEELTCVARDTKLGPEEISADIPNVSEQALNRLDESGVVYIGAEVRAGDIMVGKVTPKGESQLTPEEKLLRAIFGEKASDVKDSSLRVPPGMDGTVIDVQVFTRDGIEKDKRARQIEESEIKRVKKDFDDQFRILEAAIYMRLRSQIVGKVVNGGAGLKKGDVISDAFLDGLKKADWFALRMKDEDASEAIERAQKQIQAHEKEFERRFADKRGKITAGDDLAPGVLKMVKVFLAVKRRIQPGDKMAGRHGNKGVVSNVVPVEDMPYMASGETVDIVLNPLGVPSRMNIGQILEVHLGWAAKGLGRKIQAMMEAQAAVADLRKFLDDIYNHDDTNVANRVDLSQFSDEELLRLARNLTDGVPMATPVFDGATEAEIKRMLELADLPSSGQTQLYDGRTGEAFDRHTTVGYMHYLKLNHLVDDKMHARSTGPYSLVTQQPLGGKAQFGGQRFGEMEVWALEAYGAAYTLQEMLTVKSDDVQGRNQMYKNIVDGEHEMVAGMPESFNVLVKEIRSLAINMELEDN</sequence>
<dbReference type="EC" id="2.7.7.6" evidence="1"/>
<dbReference type="EMBL" id="CP001111">
    <property type="protein sequence ID" value="ACF50454.1"/>
    <property type="molecule type" value="Genomic_DNA"/>
</dbReference>
<dbReference type="RefSeq" id="WP_004145255.1">
    <property type="nucleotide sequence ID" value="NC_011071.1"/>
</dbReference>
<dbReference type="SMR" id="B4SKV6"/>
<dbReference type="STRING" id="391008.Smal_0749"/>
<dbReference type="KEGG" id="smt:Smal_0749"/>
<dbReference type="eggNOG" id="COG0085">
    <property type="taxonomic scope" value="Bacteria"/>
</dbReference>
<dbReference type="HOGENOM" id="CLU_000524_4_1_6"/>
<dbReference type="OrthoDB" id="9803954at2"/>
<dbReference type="Proteomes" id="UP000001867">
    <property type="component" value="Chromosome"/>
</dbReference>
<dbReference type="GO" id="GO:0000428">
    <property type="term" value="C:DNA-directed RNA polymerase complex"/>
    <property type="evidence" value="ECO:0007669"/>
    <property type="project" value="UniProtKB-KW"/>
</dbReference>
<dbReference type="GO" id="GO:0003677">
    <property type="term" value="F:DNA binding"/>
    <property type="evidence" value="ECO:0007669"/>
    <property type="project" value="UniProtKB-UniRule"/>
</dbReference>
<dbReference type="GO" id="GO:0003899">
    <property type="term" value="F:DNA-directed RNA polymerase activity"/>
    <property type="evidence" value="ECO:0007669"/>
    <property type="project" value="UniProtKB-UniRule"/>
</dbReference>
<dbReference type="GO" id="GO:0032549">
    <property type="term" value="F:ribonucleoside binding"/>
    <property type="evidence" value="ECO:0007669"/>
    <property type="project" value="InterPro"/>
</dbReference>
<dbReference type="GO" id="GO:0006351">
    <property type="term" value="P:DNA-templated transcription"/>
    <property type="evidence" value="ECO:0007669"/>
    <property type="project" value="UniProtKB-UniRule"/>
</dbReference>
<dbReference type="CDD" id="cd00653">
    <property type="entry name" value="RNA_pol_B_RPB2"/>
    <property type="match status" value="1"/>
</dbReference>
<dbReference type="FunFam" id="2.40.50.100:FF:000006">
    <property type="entry name" value="DNA-directed RNA polymerase subunit beta"/>
    <property type="match status" value="1"/>
</dbReference>
<dbReference type="FunFam" id="2.40.50.150:FF:000001">
    <property type="entry name" value="DNA-directed RNA polymerase subunit beta"/>
    <property type="match status" value="1"/>
</dbReference>
<dbReference type="FunFam" id="3.90.1800.10:FF:000001">
    <property type="entry name" value="DNA-directed RNA polymerase subunit beta"/>
    <property type="match status" value="1"/>
</dbReference>
<dbReference type="Gene3D" id="2.40.50.100">
    <property type="match status" value="1"/>
</dbReference>
<dbReference type="Gene3D" id="2.40.50.150">
    <property type="match status" value="1"/>
</dbReference>
<dbReference type="Gene3D" id="3.90.1100.10">
    <property type="match status" value="3"/>
</dbReference>
<dbReference type="Gene3D" id="6.10.140.1670">
    <property type="match status" value="1"/>
</dbReference>
<dbReference type="Gene3D" id="2.40.270.10">
    <property type="entry name" value="DNA-directed RNA polymerase, subunit 2, domain 6"/>
    <property type="match status" value="1"/>
</dbReference>
<dbReference type="Gene3D" id="3.90.1800.10">
    <property type="entry name" value="RNA polymerase alpha subunit dimerisation domain"/>
    <property type="match status" value="1"/>
</dbReference>
<dbReference type="Gene3D" id="3.90.1110.10">
    <property type="entry name" value="RNA polymerase Rpb2, domain 2"/>
    <property type="match status" value="1"/>
</dbReference>
<dbReference type="HAMAP" id="MF_01321">
    <property type="entry name" value="RNApol_bact_RpoB"/>
    <property type="match status" value="1"/>
</dbReference>
<dbReference type="InterPro" id="IPR019462">
    <property type="entry name" value="DNA-dir_RNA_pol_bsu_external_1"/>
</dbReference>
<dbReference type="InterPro" id="IPR015712">
    <property type="entry name" value="DNA-dir_RNA_pol_su2"/>
</dbReference>
<dbReference type="InterPro" id="IPR007120">
    <property type="entry name" value="DNA-dir_RNAP_su2_dom"/>
</dbReference>
<dbReference type="InterPro" id="IPR037033">
    <property type="entry name" value="DNA-dir_RNAP_su2_hyb_sf"/>
</dbReference>
<dbReference type="InterPro" id="IPR010243">
    <property type="entry name" value="RNA_pol_bsu_bac"/>
</dbReference>
<dbReference type="InterPro" id="IPR007121">
    <property type="entry name" value="RNA_pol_bsu_CS"/>
</dbReference>
<dbReference type="InterPro" id="IPR007644">
    <property type="entry name" value="RNA_pol_bsu_protrusion"/>
</dbReference>
<dbReference type="InterPro" id="IPR007642">
    <property type="entry name" value="RNA_pol_Rpb2_2"/>
</dbReference>
<dbReference type="InterPro" id="IPR037034">
    <property type="entry name" value="RNA_pol_Rpb2_2_sf"/>
</dbReference>
<dbReference type="InterPro" id="IPR007645">
    <property type="entry name" value="RNA_pol_Rpb2_3"/>
</dbReference>
<dbReference type="InterPro" id="IPR007641">
    <property type="entry name" value="RNA_pol_Rpb2_7"/>
</dbReference>
<dbReference type="InterPro" id="IPR014724">
    <property type="entry name" value="RNA_pol_RPB2_OB-fold"/>
</dbReference>
<dbReference type="NCBIfam" id="NF001616">
    <property type="entry name" value="PRK00405.1"/>
    <property type="match status" value="1"/>
</dbReference>
<dbReference type="NCBIfam" id="TIGR02013">
    <property type="entry name" value="rpoB"/>
    <property type="match status" value="1"/>
</dbReference>
<dbReference type="PANTHER" id="PTHR20856">
    <property type="entry name" value="DNA-DIRECTED RNA POLYMERASE I SUBUNIT 2"/>
    <property type="match status" value="1"/>
</dbReference>
<dbReference type="Pfam" id="PF04563">
    <property type="entry name" value="RNA_pol_Rpb2_1"/>
    <property type="match status" value="1"/>
</dbReference>
<dbReference type="Pfam" id="PF04561">
    <property type="entry name" value="RNA_pol_Rpb2_2"/>
    <property type="match status" value="3"/>
</dbReference>
<dbReference type="Pfam" id="PF04565">
    <property type="entry name" value="RNA_pol_Rpb2_3"/>
    <property type="match status" value="1"/>
</dbReference>
<dbReference type="Pfam" id="PF10385">
    <property type="entry name" value="RNA_pol_Rpb2_45"/>
    <property type="match status" value="1"/>
</dbReference>
<dbReference type="Pfam" id="PF00562">
    <property type="entry name" value="RNA_pol_Rpb2_6"/>
    <property type="match status" value="1"/>
</dbReference>
<dbReference type="Pfam" id="PF04560">
    <property type="entry name" value="RNA_pol_Rpb2_7"/>
    <property type="match status" value="1"/>
</dbReference>
<dbReference type="SUPFAM" id="SSF64484">
    <property type="entry name" value="beta and beta-prime subunits of DNA dependent RNA-polymerase"/>
    <property type="match status" value="1"/>
</dbReference>
<dbReference type="PROSITE" id="PS01166">
    <property type="entry name" value="RNA_POL_BETA"/>
    <property type="match status" value="1"/>
</dbReference>
<proteinExistence type="inferred from homology"/>
<reference key="1">
    <citation type="submission" date="2008-06" db="EMBL/GenBank/DDBJ databases">
        <title>Complete sequence of Stenotrophomonas maltophilia R551-3.</title>
        <authorList>
            <consortium name="US DOE Joint Genome Institute"/>
            <person name="Lucas S."/>
            <person name="Copeland A."/>
            <person name="Lapidus A."/>
            <person name="Glavina del Rio T."/>
            <person name="Dalin E."/>
            <person name="Tice H."/>
            <person name="Pitluck S."/>
            <person name="Chain P."/>
            <person name="Malfatti S."/>
            <person name="Shin M."/>
            <person name="Vergez L."/>
            <person name="Lang D."/>
            <person name="Schmutz J."/>
            <person name="Larimer F."/>
            <person name="Land M."/>
            <person name="Hauser L."/>
            <person name="Kyrpides N."/>
            <person name="Mikhailova N."/>
            <person name="Taghavi S."/>
            <person name="Monchy S."/>
            <person name="Newman L."/>
            <person name="Vangronsveld J."/>
            <person name="van der Lelie D."/>
            <person name="Richardson P."/>
        </authorList>
    </citation>
    <scope>NUCLEOTIDE SEQUENCE [LARGE SCALE GENOMIC DNA]</scope>
    <source>
        <strain>R551-3</strain>
    </source>
</reference>
<protein>
    <recommendedName>
        <fullName evidence="1">DNA-directed RNA polymerase subunit beta</fullName>
        <shortName evidence="1">RNAP subunit beta</shortName>
        <ecNumber evidence="1">2.7.7.6</ecNumber>
    </recommendedName>
    <alternativeName>
        <fullName evidence="1">RNA polymerase subunit beta</fullName>
    </alternativeName>
    <alternativeName>
        <fullName evidence="1">Transcriptase subunit beta</fullName>
    </alternativeName>
</protein>
<organism>
    <name type="scientific">Stenotrophomonas maltophilia (strain R551-3)</name>
    <dbReference type="NCBI Taxonomy" id="391008"/>
    <lineage>
        <taxon>Bacteria</taxon>
        <taxon>Pseudomonadati</taxon>
        <taxon>Pseudomonadota</taxon>
        <taxon>Gammaproteobacteria</taxon>
        <taxon>Lysobacterales</taxon>
        <taxon>Lysobacteraceae</taxon>
        <taxon>Stenotrophomonas</taxon>
        <taxon>Stenotrophomonas maltophilia group</taxon>
    </lineage>
</organism>
<keyword id="KW-0240">DNA-directed RNA polymerase</keyword>
<keyword id="KW-0548">Nucleotidyltransferase</keyword>
<keyword id="KW-0804">Transcription</keyword>
<keyword id="KW-0808">Transferase</keyword>
<feature type="chain" id="PRO_1000165823" description="DNA-directed RNA polymerase subunit beta">
    <location>
        <begin position="1"/>
        <end position="1384"/>
    </location>
</feature>